<name>PSB_ACIFD</name>
<proteinExistence type="inferred from homology"/>
<accession>C7LYP7</accession>
<protein>
    <recommendedName>
        <fullName evidence="1">Proteasome subunit beta</fullName>
        <ecNumber evidence="1">3.4.25.1</ecNumber>
    </recommendedName>
    <alternativeName>
        <fullName evidence="1">20S proteasome beta subunit</fullName>
    </alternativeName>
    <alternativeName>
        <fullName evidence="1">Proteasome core protein PrcB</fullName>
    </alternativeName>
</protein>
<gene>
    <name evidence="1" type="primary">prcB</name>
    <name type="ordered locus">Afer_0910</name>
</gene>
<feature type="propeptide" id="PRO_0000397488" description="Removed in mature form; by autocatalysis" evidence="1">
    <location>
        <begin position="1"/>
        <end position="50"/>
    </location>
</feature>
<feature type="chain" id="PRO_0000397489" description="Proteasome subunit beta">
    <location>
        <begin position="51"/>
        <end position="273"/>
    </location>
</feature>
<feature type="active site" description="Nucleophile" evidence="1">
    <location>
        <position position="51"/>
    </location>
</feature>
<comment type="function">
    <text evidence="1">Component of the proteasome core, a large protease complex with broad specificity involved in protein degradation.</text>
</comment>
<comment type="catalytic activity">
    <reaction evidence="1">
        <text>Cleavage of peptide bonds with very broad specificity.</text>
        <dbReference type="EC" id="3.4.25.1"/>
    </reaction>
</comment>
<comment type="activity regulation">
    <text evidence="1">The formation of the proteasomal ATPase ARC-20S proteasome complex, likely via the docking of the C-termini of ARC into the intersubunit pockets in the alpha-rings, may trigger opening of the gate for substrate entry. Interconversion between the open-gate and close-gate conformations leads to a dynamic regulation of the 20S proteasome proteolysis activity.</text>
</comment>
<comment type="pathway">
    <text evidence="1">Protein degradation; proteasomal Pup-dependent pathway.</text>
</comment>
<comment type="subunit">
    <text evidence="1">The 20S proteasome core is composed of 14 alpha and 14 beta subunits that assemble into four stacked heptameric rings, resulting in a barrel-shaped structure. The two inner rings, each composed of seven catalytic beta subunits, are sandwiched by two outer rings, each composed of seven alpha subunits. The catalytic chamber with the active sites is on the inside of the barrel. Has a gated structure, the ends of the cylinder being occluded by the N-termini of the alpha-subunits. Is capped by the proteasome-associated ATPase, ARC.</text>
</comment>
<comment type="subcellular location">
    <subcellularLocation>
        <location evidence="1">Cytoplasm</location>
    </subcellularLocation>
</comment>
<comment type="similarity">
    <text evidence="1">Belongs to the peptidase T1B family.</text>
</comment>
<organism>
    <name type="scientific">Acidimicrobium ferrooxidans (strain DSM 10331 / JCM 15462 / NBRC 103882 / ICP)</name>
    <dbReference type="NCBI Taxonomy" id="525909"/>
    <lineage>
        <taxon>Bacteria</taxon>
        <taxon>Bacillati</taxon>
        <taxon>Actinomycetota</taxon>
        <taxon>Acidimicrobiia</taxon>
        <taxon>Acidimicrobiales</taxon>
        <taxon>Acidimicrobiaceae</taxon>
        <taxon>Acidimicrobium</taxon>
    </lineage>
</organism>
<sequence>MRKDGARLALPLFDPRHDPGPDFAALVSRDAARTVPTSGDGSLGAQVPHGTTIAALRFAGGVVIAGDRRATEGNFIANRTIEKVFPADRFSGVGIAGAAGPAVEMVRIFQVQLEHYEKVEGKALSLEGKANQLAQMIRQNLPLAMQGLVVMPLFAGWDAERSEGRIFTFDVAGGRYEEVAYYAIGSGGRDARATLKLGWRPGLDEAGAVHLAVQALYEAAQEDAATGGPDALRGIFPVVAVIDREGYRRIDDARLEEIAVELDQAVRERGARR</sequence>
<dbReference type="EC" id="3.4.25.1" evidence="1"/>
<dbReference type="EMBL" id="CP001631">
    <property type="protein sequence ID" value="ACU53855.1"/>
    <property type="molecule type" value="Genomic_DNA"/>
</dbReference>
<dbReference type="SMR" id="C7LYP7"/>
<dbReference type="STRING" id="525909.Afer_0910"/>
<dbReference type="MEROPS" id="T01.005"/>
<dbReference type="KEGG" id="afo:Afer_0910"/>
<dbReference type="eggNOG" id="COG0638">
    <property type="taxonomic scope" value="Bacteria"/>
</dbReference>
<dbReference type="HOGENOM" id="CLU_035750_2_0_11"/>
<dbReference type="OrthoDB" id="5174038at2"/>
<dbReference type="UniPathway" id="UPA00997"/>
<dbReference type="Proteomes" id="UP000000771">
    <property type="component" value="Chromosome"/>
</dbReference>
<dbReference type="GO" id="GO:0005737">
    <property type="term" value="C:cytoplasm"/>
    <property type="evidence" value="ECO:0007669"/>
    <property type="project" value="UniProtKB-SubCell"/>
</dbReference>
<dbReference type="GO" id="GO:0019774">
    <property type="term" value="C:proteasome core complex, beta-subunit complex"/>
    <property type="evidence" value="ECO:0007669"/>
    <property type="project" value="UniProtKB-UniRule"/>
</dbReference>
<dbReference type="GO" id="GO:0004298">
    <property type="term" value="F:threonine-type endopeptidase activity"/>
    <property type="evidence" value="ECO:0007669"/>
    <property type="project" value="UniProtKB-UniRule"/>
</dbReference>
<dbReference type="GO" id="GO:0019941">
    <property type="term" value="P:modification-dependent protein catabolic process"/>
    <property type="evidence" value="ECO:0007669"/>
    <property type="project" value="UniProtKB-UniRule"/>
</dbReference>
<dbReference type="GO" id="GO:0010498">
    <property type="term" value="P:proteasomal protein catabolic process"/>
    <property type="evidence" value="ECO:0007669"/>
    <property type="project" value="UniProtKB-UniRule"/>
</dbReference>
<dbReference type="CDD" id="cd01906">
    <property type="entry name" value="proteasome_protease_HslV"/>
    <property type="match status" value="1"/>
</dbReference>
<dbReference type="Gene3D" id="3.60.20.10">
    <property type="entry name" value="Glutamine Phosphoribosylpyrophosphate, subunit 1, domain 1"/>
    <property type="match status" value="1"/>
</dbReference>
<dbReference type="HAMAP" id="MF_02113_B">
    <property type="entry name" value="Proteasome_B_B"/>
    <property type="match status" value="1"/>
</dbReference>
<dbReference type="InterPro" id="IPR029055">
    <property type="entry name" value="Ntn_hydrolases_N"/>
</dbReference>
<dbReference type="InterPro" id="IPR001353">
    <property type="entry name" value="Proteasome_sua/b"/>
</dbReference>
<dbReference type="InterPro" id="IPR023333">
    <property type="entry name" value="Proteasome_suB-type"/>
</dbReference>
<dbReference type="InterPro" id="IPR022483">
    <property type="entry name" value="PSB_actinobac"/>
</dbReference>
<dbReference type="NCBIfam" id="TIGR03690">
    <property type="entry name" value="20S_bact_beta"/>
    <property type="match status" value="1"/>
</dbReference>
<dbReference type="PANTHER" id="PTHR32194:SF0">
    <property type="entry name" value="ATP-DEPENDENT PROTEASE SUBUNIT HSLV"/>
    <property type="match status" value="1"/>
</dbReference>
<dbReference type="PANTHER" id="PTHR32194">
    <property type="entry name" value="METALLOPROTEASE TLDD"/>
    <property type="match status" value="1"/>
</dbReference>
<dbReference type="Pfam" id="PF00227">
    <property type="entry name" value="Proteasome"/>
    <property type="match status" value="1"/>
</dbReference>
<dbReference type="SUPFAM" id="SSF56235">
    <property type="entry name" value="N-terminal nucleophile aminohydrolases (Ntn hydrolases)"/>
    <property type="match status" value="1"/>
</dbReference>
<dbReference type="PROSITE" id="PS51476">
    <property type="entry name" value="PROTEASOME_BETA_2"/>
    <property type="match status" value="1"/>
</dbReference>
<reference key="1">
    <citation type="journal article" date="2009" name="Stand. Genomic Sci.">
        <title>Complete genome sequence of Acidimicrobium ferrooxidans type strain (ICP).</title>
        <authorList>
            <person name="Clum A."/>
            <person name="Nolan M."/>
            <person name="Lang E."/>
            <person name="Glavina Del Rio T."/>
            <person name="Tice H."/>
            <person name="Copeland A."/>
            <person name="Cheng J.F."/>
            <person name="Lucas S."/>
            <person name="Chen F."/>
            <person name="Bruce D."/>
            <person name="Goodwin L."/>
            <person name="Pitluck S."/>
            <person name="Ivanova N."/>
            <person name="Mavrommatis K."/>
            <person name="Mikhailova N."/>
            <person name="Pati A."/>
            <person name="Chen A."/>
            <person name="Palaniappan K."/>
            <person name="Goker M."/>
            <person name="Spring S."/>
            <person name="Land M."/>
            <person name="Hauser L."/>
            <person name="Chang Y.J."/>
            <person name="Jeffries C.C."/>
            <person name="Chain P."/>
            <person name="Bristow J."/>
            <person name="Eisen J.A."/>
            <person name="Markowitz V."/>
            <person name="Hugenholtz P."/>
            <person name="Kyrpides N.C."/>
            <person name="Klenk H.P."/>
            <person name="Lapidus A."/>
        </authorList>
    </citation>
    <scope>NUCLEOTIDE SEQUENCE [LARGE SCALE GENOMIC DNA]</scope>
    <source>
        <strain>DSM 10331 / JCM 15462 / NBRC 103882 / ICP</strain>
    </source>
</reference>
<evidence type="ECO:0000255" key="1">
    <source>
        <dbReference type="HAMAP-Rule" id="MF_02113"/>
    </source>
</evidence>
<keyword id="KW-0068">Autocatalytic cleavage</keyword>
<keyword id="KW-0963">Cytoplasm</keyword>
<keyword id="KW-0378">Hydrolase</keyword>
<keyword id="KW-0645">Protease</keyword>
<keyword id="KW-0647">Proteasome</keyword>
<keyword id="KW-1185">Reference proteome</keyword>
<keyword id="KW-0888">Threonine protease</keyword>
<keyword id="KW-0865">Zymogen</keyword>